<protein>
    <recommendedName>
        <fullName evidence="2">Uncharacterized protein C14orf132</fullName>
    </recommendedName>
</protein>
<feature type="chain" id="PRO_0000089934" description="Uncharacterized protein C14orf132">
    <location>
        <begin position="1"/>
        <end position="83"/>
    </location>
</feature>
<feature type="transmembrane region" description="Helical" evidence="1">
    <location>
        <begin position="58"/>
        <end position="78"/>
    </location>
</feature>
<sequence>MDLSFMAAQLPMMGGAFMDSPNEDFSTEYSLFNSSANVHAAANGQGQPEDPPRSSNDAVLLWIAIIATLGNIVVVGVVYAFTF</sequence>
<dbReference type="EMBL" id="AL137190">
    <property type="status" value="NOT_ANNOTATED_CDS"/>
    <property type="molecule type" value="Genomic_DNA"/>
</dbReference>
<dbReference type="EMBL" id="AK313017">
    <property type="protein sequence ID" value="BAG35852.1"/>
    <property type="status" value="ALT_SEQ"/>
    <property type="molecule type" value="mRNA"/>
</dbReference>
<dbReference type="EMBL" id="AL390130">
    <property type="protein sequence ID" value="CAB99085.1"/>
    <property type="status" value="ALT_SEQ"/>
    <property type="molecule type" value="mRNA"/>
</dbReference>
<dbReference type="EMBL" id="CH471061">
    <property type="protein sequence ID" value="EAW81627.1"/>
    <property type="status" value="ALT_SEQ"/>
    <property type="molecule type" value="Genomic_DNA"/>
</dbReference>
<dbReference type="CCDS" id="CCDS81848.1"/>
<dbReference type="PIR" id="T51868">
    <property type="entry name" value="T51868"/>
</dbReference>
<dbReference type="RefSeq" id="NP_001239436.1">
    <property type="nucleotide sequence ID" value="NM_001252507.3"/>
</dbReference>
<dbReference type="RefSeq" id="NP_001269393.1">
    <property type="nucleotide sequence ID" value="NM_001282464.2"/>
</dbReference>
<dbReference type="SMR" id="Q9NPU4"/>
<dbReference type="FunCoup" id="Q9NPU4">
    <property type="interactions" value="8"/>
</dbReference>
<dbReference type="STRING" id="9606.ENSP00000490925"/>
<dbReference type="BioMuta" id="C14orf132"/>
<dbReference type="PeptideAtlas" id="Q9NPU4"/>
<dbReference type="Antibodypedia" id="48894">
    <property type="antibodies" value="3 antibodies from 3 providers"/>
</dbReference>
<dbReference type="DNASU" id="56967"/>
<dbReference type="Ensembl" id="ENST00000555004.3">
    <property type="protein sequence ID" value="ENSP00000490729.1"/>
    <property type="gene ID" value="ENSG00000227051.7"/>
</dbReference>
<dbReference type="Ensembl" id="ENST00000556728.1">
    <property type="protein sequence ID" value="ENSP00000490894.1"/>
    <property type="gene ID" value="ENSG00000227051.7"/>
</dbReference>
<dbReference type="GeneID" id="56967"/>
<dbReference type="KEGG" id="hsa:56967"/>
<dbReference type="MANE-Select" id="ENST00000555004.3">
    <property type="protein sequence ID" value="ENSP00000490729.1"/>
    <property type="RefSeq nucleotide sequence ID" value="NM_001252507.3"/>
    <property type="RefSeq protein sequence ID" value="NP_001239436.1"/>
</dbReference>
<dbReference type="AGR" id="HGNC:20346"/>
<dbReference type="CTD" id="56967"/>
<dbReference type="DisGeNET" id="56967"/>
<dbReference type="GeneCards" id="C14orf132"/>
<dbReference type="HGNC" id="HGNC:20346">
    <property type="gene designation" value="C14orf132"/>
</dbReference>
<dbReference type="HPA" id="ENSG00000227051">
    <property type="expression patterns" value="Tissue enhanced (brain)"/>
</dbReference>
<dbReference type="neXtProt" id="NX_Q9NPU4"/>
<dbReference type="OpenTargets" id="ENSG00000227051"/>
<dbReference type="VEuPathDB" id="HostDB:ENSG00000227051"/>
<dbReference type="GeneTree" id="ENSGT00700000106116"/>
<dbReference type="InParanoid" id="Q9NPU4"/>
<dbReference type="OMA" id="DYSAEHS"/>
<dbReference type="OrthoDB" id="9943350at2759"/>
<dbReference type="PAN-GO" id="Q9NPU4">
    <property type="GO annotations" value="0 GO annotations based on evolutionary models"/>
</dbReference>
<dbReference type="PathwayCommons" id="Q9NPU4"/>
<dbReference type="BioGRID-ORCS" id="56967">
    <property type="hits" value="11 hits in 375 CRISPR screens"/>
</dbReference>
<dbReference type="ChiTaRS" id="C14orf132">
    <property type="organism name" value="human"/>
</dbReference>
<dbReference type="GenomeRNAi" id="56967"/>
<dbReference type="Pharos" id="Q9NPU4">
    <property type="development level" value="Tdark"/>
</dbReference>
<dbReference type="PRO" id="PR:Q9NPU4"/>
<dbReference type="Proteomes" id="UP000005640">
    <property type="component" value="Chromosome 14"/>
</dbReference>
<dbReference type="RNAct" id="Q9NPU4">
    <property type="molecule type" value="protein"/>
</dbReference>
<dbReference type="Bgee" id="ENSG00000227051">
    <property type="expression patterns" value="Expressed in middle temporal gyrus and 184 other cell types or tissues"/>
</dbReference>
<dbReference type="ExpressionAtlas" id="Q9NPU4">
    <property type="expression patterns" value="baseline and differential"/>
</dbReference>
<dbReference type="GO" id="GO:0016020">
    <property type="term" value="C:membrane"/>
    <property type="evidence" value="ECO:0007669"/>
    <property type="project" value="UniProtKB-SubCell"/>
</dbReference>
<reference key="1">
    <citation type="journal article" date="2003" name="Nature">
        <title>The DNA sequence and analysis of human chromosome 14.</title>
        <authorList>
            <person name="Heilig R."/>
            <person name="Eckenberg R."/>
            <person name="Petit J.-L."/>
            <person name="Fonknechten N."/>
            <person name="Da Silva C."/>
            <person name="Cattolico L."/>
            <person name="Levy M."/>
            <person name="Barbe V."/>
            <person name="De Berardinis V."/>
            <person name="Ureta-Vidal A."/>
            <person name="Pelletier E."/>
            <person name="Vico V."/>
            <person name="Anthouard V."/>
            <person name="Rowen L."/>
            <person name="Madan A."/>
            <person name="Qin S."/>
            <person name="Sun H."/>
            <person name="Du H."/>
            <person name="Pepin K."/>
            <person name="Artiguenave F."/>
            <person name="Robert C."/>
            <person name="Cruaud C."/>
            <person name="Bruels T."/>
            <person name="Jaillon O."/>
            <person name="Friedlander L."/>
            <person name="Samson G."/>
            <person name="Brottier P."/>
            <person name="Cure S."/>
            <person name="Segurens B."/>
            <person name="Aniere F."/>
            <person name="Samain S."/>
            <person name="Crespeau H."/>
            <person name="Abbasi N."/>
            <person name="Aiach N."/>
            <person name="Boscus D."/>
            <person name="Dickhoff R."/>
            <person name="Dors M."/>
            <person name="Dubois I."/>
            <person name="Friedman C."/>
            <person name="Gouyvenoux M."/>
            <person name="James R."/>
            <person name="Madan A."/>
            <person name="Mairey-Estrada B."/>
            <person name="Mangenot S."/>
            <person name="Martins N."/>
            <person name="Menard M."/>
            <person name="Oztas S."/>
            <person name="Ratcliffe A."/>
            <person name="Shaffer T."/>
            <person name="Trask B."/>
            <person name="Vacherie B."/>
            <person name="Bellemere C."/>
            <person name="Belser C."/>
            <person name="Besnard-Gonnet M."/>
            <person name="Bartol-Mavel D."/>
            <person name="Boutard M."/>
            <person name="Briez-Silla S."/>
            <person name="Combette S."/>
            <person name="Dufosse-Laurent V."/>
            <person name="Ferron C."/>
            <person name="Lechaplais C."/>
            <person name="Louesse C."/>
            <person name="Muselet D."/>
            <person name="Magdelenat G."/>
            <person name="Pateau E."/>
            <person name="Petit E."/>
            <person name="Sirvain-Trukniewicz P."/>
            <person name="Trybou A."/>
            <person name="Vega-Czarny N."/>
            <person name="Bataille E."/>
            <person name="Bluet E."/>
            <person name="Bordelais I."/>
            <person name="Dubois M."/>
            <person name="Dumont C."/>
            <person name="Guerin T."/>
            <person name="Haffray S."/>
            <person name="Hammadi R."/>
            <person name="Muanga J."/>
            <person name="Pellouin V."/>
            <person name="Robert D."/>
            <person name="Wunderle E."/>
            <person name="Gauguet G."/>
            <person name="Roy A."/>
            <person name="Sainte-Marthe L."/>
            <person name="Verdier J."/>
            <person name="Verdier-Discala C."/>
            <person name="Hillier L.W."/>
            <person name="Fulton L."/>
            <person name="McPherson J."/>
            <person name="Matsuda F."/>
            <person name="Wilson R."/>
            <person name="Scarpelli C."/>
            <person name="Gyapay G."/>
            <person name="Wincker P."/>
            <person name="Saurin W."/>
            <person name="Quetier F."/>
            <person name="Waterston R."/>
            <person name="Hood L."/>
            <person name="Weissenbach J."/>
        </authorList>
    </citation>
    <scope>NUCLEOTIDE SEQUENCE [LARGE SCALE GENOMIC DNA]</scope>
</reference>
<reference key="2">
    <citation type="journal article" date="2004" name="Nat. Genet.">
        <title>Complete sequencing and characterization of 21,243 full-length human cDNAs.</title>
        <authorList>
            <person name="Ota T."/>
            <person name="Suzuki Y."/>
            <person name="Nishikawa T."/>
            <person name="Otsuki T."/>
            <person name="Sugiyama T."/>
            <person name="Irie R."/>
            <person name="Wakamatsu A."/>
            <person name="Hayashi K."/>
            <person name="Sato H."/>
            <person name="Nagai K."/>
            <person name="Kimura K."/>
            <person name="Makita H."/>
            <person name="Sekine M."/>
            <person name="Obayashi M."/>
            <person name="Nishi T."/>
            <person name="Shibahara T."/>
            <person name="Tanaka T."/>
            <person name="Ishii S."/>
            <person name="Yamamoto J."/>
            <person name="Saito K."/>
            <person name="Kawai Y."/>
            <person name="Isono Y."/>
            <person name="Nakamura Y."/>
            <person name="Nagahari K."/>
            <person name="Murakami K."/>
            <person name="Yasuda T."/>
            <person name="Iwayanagi T."/>
            <person name="Wagatsuma M."/>
            <person name="Shiratori A."/>
            <person name="Sudo H."/>
            <person name="Hosoiri T."/>
            <person name="Kaku Y."/>
            <person name="Kodaira H."/>
            <person name="Kondo H."/>
            <person name="Sugawara M."/>
            <person name="Takahashi M."/>
            <person name="Kanda K."/>
            <person name="Yokoi T."/>
            <person name="Furuya T."/>
            <person name="Kikkawa E."/>
            <person name="Omura Y."/>
            <person name="Abe K."/>
            <person name="Kamihara K."/>
            <person name="Katsuta N."/>
            <person name="Sato K."/>
            <person name="Tanikawa M."/>
            <person name="Yamazaki M."/>
            <person name="Ninomiya K."/>
            <person name="Ishibashi T."/>
            <person name="Yamashita H."/>
            <person name="Murakawa K."/>
            <person name="Fujimori K."/>
            <person name="Tanai H."/>
            <person name="Kimata M."/>
            <person name="Watanabe M."/>
            <person name="Hiraoka S."/>
            <person name="Chiba Y."/>
            <person name="Ishida S."/>
            <person name="Ono Y."/>
            <person name="Takiguchi S."/>
            <person name="Watanabe S."/>
            <person name="Yosida M."/>
            <person name="Hotuta T."/>
            <person name="Kusano J."/>
            <person name="Kanehori K."/>
            <person name="Takahashi-Fujii A."/>
            <person name="Hara H."/>
            <person name="Tanase T.-O."/>
            <person name="Nomura Y."/>
            <person name="Togiya S."/>
            <person name="Komai F."/>
            <person name="Hara R."/>
            <person name="Takeuchi K."/>
            <person name="Arita M."/>
            <person name="Imose N."/>
            <person name="Musashino K."/>
            <person name="Yuuki H."/>
            <person name="Oshima A."/>
            <person name="Sasaki N."/>
            <person name="Aotsuka S."/>
            <person name="Yoshikawa Y."/>
            <person name="Matsunawa H."/>
            <person name="Ichihara T."/>
            <person name="Shiohata N."/>
            <person name="Sano S."/>
            <person name="Moriya S."/>
            <person name="Momiyama H."/>
            <person name="Satoh N."/>
            <person name="Takami S."/>
            <person name="Terashima Y."/>
            <person name="Suzuki O."/>
            <person name="Nakagawa S."/>
            <person name="Senoh A."/>
            <person name="Mizoguchi H."/>
            <person name="Goto Y."/>
            <person name="Shimizu F."/>
            <person name="Wakebe H."/>
            <person name="Hishigaki H."/>
            <person name="Watanabe T."/>
            <person name="Sugiyama A."/>
            <person name="Takemoto M."/>
            <person name="Kawakami B."/>
            <person name="Yamazaki M."/>
            <person name="Watanabe K."/>
            <person name="Kumagai A."/>
            <person name="Itakura S."/>
            <person name="Fukuzumi Y."/>
            <person name="Fujimori Y."/>
            <person name="Komiyama M."/>
            <person name="Tashiro H."/>
            <person name="Tanigami A."/>
            <person name="Fujiwara T."/>
            <person name="Ono T."/>
            <person name="Yamada K."/>
            <person name="Fujii Y."/>
            <person name="Ozaki K."/>
            <person name="Hirao M."/>
            <person name="Ohmori Y."/>
            <person name="Kawabata A."/>
            <person name="Hikiji T."/>
            <person name="Kobatake N."/>
            <person name="Inagaki H."/>
            <person name="Ikema Y."/>
            <person name="Okamoto S."/>
            <person name="Okitani R."/>
            <person name="Kawakami T."/>
            <person name="Noguchi S."/>
            <person name="Itoh T."/>
            <person name="Shigeta K."/>
            <person name="Senba T."/>
            <person name="Matsumura K."/>
            <person name="Nakajima Y."/>
            <person name="Mizuno T."/>
            <person name="Morinaga M."/>
            <person name="Sasaki M."/>
            <person name="Togashi T."/>
            <person name="Oyama M."/>
            <person name="Hata H."/>
            <person name="Watanabe M."/>
            <person name="Komatsu T."/>
            <person name="Mizushima-Sugano J."/>
            <person name="Satoh T."/>
            <person name="Shirai Y."/>
            <person name="Takahashi Y."/>
            <person name="Nakagawa K."/>
            <person name="Okumura K."/>
            <person name="Nagase T."/>
            <person name="Nomura N."/>
            <person name="Kikuchi H."/>
            <person name="Masuho Y."/>
            <person name="Yamashita R."/>
            <person name="Nakai K."/>
            <person name="Yada T."/>
            <person name="Nakamura Y."/>
            <person name="Ohara O."/>
            <person name="Isogai T."/>
            <person name="Sugano S."/>
        </authorList>
    </citation>
    <scope>PARTIAL NUCLEOTIDE SEQUENCE [LARGE SCALE MRNA]</scope>
    <source>
        <tissue>Cerebellum</tissue>
    </source>
</reference>
<reference key="3">
    <citation type="journal article" date="2007" name="BMC Genomics">
        <title>The full-ORF clone resource of the German cDNA consortium.</title>
        <authorList>
            <person name="Bechtel S."/>
            <person name="Rosenfelder H."/>
            <person name="Duda A."/>
            <person name="Schmidt C.P."/>
            <person name="Ernst U."/>
            <person name="Wellenreuther R."/>
            <person name="Mehrle A."/>
            <person name="Schuster C."/>
            <person name="Bahr A."/>
            <person name="Bloecker H."/>
            <person name="Heubner D."/>
            <person name="Hoerlein A."/>
            <person name="Michel G."/>
            <person name="Wedler H."/>
            <person name="Koehrer K."/>
            <person name="Ottenwaelder B."/>
            <person name="Poustka A."/>
            <person name="Wiemann S."/>
            <person name="Schupp I."/>
        </authorList>
    </citation>
    <scope>PARTIAL NUCLEOTIDE SEQUENCE [LARGE SCALE MRNA]</scope>
    <source>
        <tissue>Amygdala</tissue>
    </source>
</reference>
<reference key="4">
    <citation type="submission" date="2005-07" db="EMBL/GenBank/DDBJ databases">
        <authorList>
            <person name="Mural R.J."/>
            <person name="Istrail S."/>
            <person name="Sutton G.G."/>
            <person name="Florea L."/>
            <person name="Halpern A.L."/>
            <person name="Mobarry C.M."/>
            <person name="Lippert R."/>
            <person name="Walenz B."/>
            <person name="Shatkay H."/>
            <person name="Dew I."/>
            <person name="Miller J.R."/>
            <person name="Flanigan M.J."/>
            <person name="Edwards N.J."/>
            <person name="Bolanos R."/>
            <person name="Fasulo D."/>
            <person name="Halldorsson B.V."/>
            <person name="Hannenhalli S."/>
            <person name="Turner R."/>
            <person name="Yooseph S."/>
            <person name="Lu F."/>
            <person name="Nusskern D.R."/>
            <person name="Shue B.C."/>
            <person name="Zheng X.H."/>
            <person name="Zhong F."/>
            <person name="Delcher A.L."/>
            <person name="Huson D.H."/>
            <person name="Kravitz S.A."/>
            <person name="Mouchard L."/>
            <person name="Reinert K."/>
            <person name="Remington K.A."/>
            <person name="Clark A.G."/>
            <person name="Waterman M.S."/>
            <person name="Eichler E.E."/>
            <person name="Adams M.D."/>
            <person name="Hunkapiller M.W."/>
            <person name="Myers E.W."/>
            <person name="Venter J.C."/>
        </authorList>
    </citation>
    <scope>PARTIAL NUCLEOTIDE SEQUENCE [LARGE SCALE GENOMIC DNA]</scope>
</reference>
<proteinExistence type="inferred from homology"/>
<gene>
    <name evidence="3" type="primary">C14orf132</name>
    <name evidence="3" type="synonym">C14orf88</name>
</gene>
<comment type="subcellular location">
    <subcellularLocation>
        <location evidence="1">Membrane</location>
        <topology evidence="1">Single-pass membrane protein</topology>
    </subcellularLocation>
</comment>
<comment type="sequence caution" evidence="2">
    <conflict type="erroneous translation">
        <sequence resource="EMBL-CDS" id="BAG35852"/>
    </conflict>
</comment>
<comment type="sequence caution" evidence="2">
    <conflict type="erroneous translation">
        <sequence resource="EMBL-CDS" id="CAB99085"/>
    </conflict>
</comment>
<comment type="sequence caution" evidence="2">
    <conflict type="erroneous gene model prediction">
        <sequence resource="EMBL-CDS" id="EAW81627"/>
    </conflict>
</comment>
<organism>
    <name type="scientific">Homo sapiens</name>
    <name type="common">Human</name>
    <dbReference type="NCBI Taxonomy" id="9606"/>
    <lineage>
        <taxon>Eukaryota</taxon>
        <taxon>Metazoa</taxon>
        <taxon>Chordata</taxon>
        <taxon>Craniata</taxon>
        <taxon>Vertebrata</taxon>
        <taxon>Euteleostomi</taxon>
        <taxon>Mammalia</taxon>
        <taxon>Eutheria</taxon>
        <taxon>Euarchontoglires</taxon>
        <taxon>Primates</taxon>
        <taxon>Haplorrhini</taxon>
        <taxon>Catarrhini</taxon>
        <taxon>Hominidae</taxon>
        <taxon>Homo</taxon>
    </lineage>
</organism>
<keyword id="KW-0472">Membrane</keyword>
<keyword id="KW-1185">Reference proteome</keyword>
<keyword id="KW-0812">Transmembrane</keyword>
<keyword id="KW-1133">Transmembrane helix</keyword>
<evidence type="ECO:0000255" key="1"/>
<evidence type="ECO:0000305" key="2"/>
<evidence type="ECO:0000312" key="3">
    <source>
        <dbReference type="HGNC" id="HGNC:20346"/>
    </source>
</evidence>
<accession>Q9NPU4</accession>
<accession>B2R7K5</accession>
<name>CN132_HUMAN</name>